<accession>Q8TT40</accession>
<protein>
    <recommendedName>
        <fullName evidence="1">DNA-directed RNA polymerase subunit Rpo6</fullName>
        <ecNumber evidence="1">2.7.7.6</ecNumber>
    </recommendedName>
    <alternativeName>
        <fullName evidence="1">DNA-directed RNA polymerase subunit K</fullName>
    </alternativeName>
</protein>
<keyword id="KW-0963">Cytoplasm</keyword>
<keyword id="KW-0240">DNA-directed RNA polymerase</keyword>
<keyword id="KW-0548">Nucleotidyltransferase</keyword>
<keyword id="KW-1185">Reference proteome</keyword>
<keyword id="KW-0804">Transcription</keyword>
<keyword id="KW-0808">Transferase</keyword>
<feature type="chain" id="PRO_0000133812" description="DNA-directed RNA polymerase subunit Rpo6">
    <location>
        <begin position="1"/>
        <end position="60"/>
    </location>
</feature>
<reference key="1">
    <citation type="journal article" date="2002" name="Genome Res.">
        <title>The genome of Methanosarcina acetivorans reveals extensive metabolic and physiological diversity.</title>
        <authorList>
            <person name="Galagan J.E."/>
            <person name="Nusbaum C."/>
            <person name="Roy A."/>
            <person name="Endrizzi M.G."/>
            <person name="Macdonald P."/>
            <person name="FitzHugh W."/>
            <person name="Calvo S."/>
            <person name="Engels R."/>
            <person name="Smirnov S."/>
            <person name="Atnoor D."/>
            <person name="Brown A."/>
            <person name="Allen N."/>
            <person name="Naylor J."/>
            <person name="Stange-Thomann N."/>
            <person name="DeArellano K."/>
            <person name="Johnson R."/>
            <person name="Linton L."/>
            <person name="McEwan P."/>
            <person name="McKernan K."/>
            <person name="Talamas J."/>
            <person name="Tirrell A."/>
            <person name="Ye W."/>
            <person name="Zimmer A."/>
            <person name="Barber R.D."/>
            <person name="Cann I."/>
            <person name="Graham D.E."/>
            <person name="Grahame D.A."/>
            <person name="Guss A.M."/>
            <person name="Hedderich R."/>
            <person name="Ingram-Smith C."/>
            <person name="Kuettner H.C."/>
            <person name="Krzycki J.A."/>
            <person name="Leigh J.A."/>
            <person name="Li W."/>
            <person name="Liu J."/>
            <person name="Mukhopadhyay B."/>
            <person name="Reeve J.N."/>
            <person name="Smith K."/>
            <person name="Springer T.A."/>
            <person name="Umayam L.A."/>
            <person name="White O."/>
            <person name="White R.H."/>
            <person name="de Macario E.C."/>
            <person name="Ferry J.G."/>
            <person name="Jarrell K.F."/>
            <person name="Jing H."/>
            <person name="Macario A.J.L."/>
            <person name="Paulsen I.T."/>
            <person name="Pritchett M."/>
            <person name="Sowers K.R."/>
            <person name="Swanson R.V."/>
            <person name="Zinder S.H."/>
            <person name="Lander E."/>
            <person name="Metcalf W.W."/>
            <person name="Birren B."/>
        </authorList>
    </citation>
    <scope>NUCLEOTIDE SEQUENCE [LARGE SCALE GENOMIC DNA]</scope>
    <source>
        <strain>ATCC 35395 / DSM 2834 / JCM 12185 / C2A</strain>
    </source>
</reference>
<name>RPO6_METAC</name>
<evidence type="ECO:0000255" key="1">
    <source>
        <dbReference type="HAMAP-Rule" id="MF_00192"/>
    </source>
</evidence>
<evidence type="ECO:0000303" key="2">
    <source>
    </source>
</evidence>
<dbReference type="EC" id="2.7.7.6" evidence="1"/>
<dbReference type="EMBL" id="AE010299">
    <property type="protein sequence ID" value="AAM04043.1"/>
    <property type="molecule type" value="Genomic_DNA"/>
</dbReference>
<dbReference type="RefSeq" id="WP_011020648.1">
    <property type="nucleotide sequence ID" value="NC_003552.1"/>
</dbReference>
<dbReference type="SMR" id="Q8TT40"/>
<dbReference type="STRING" id="188937.MA_0599"/>
<dbReference type="EnsemblBacteria" id="AAM04043">
    <property type="protein sequence ID" value="AAM04043"/>
    <property type="gene ID" value="MA_0599"/>
</dbReference>
<dbReference type="GeneID" id="1472491"/>
<dbReference type="KEGG" id="mac:MA_0599"/>
<dbReference type="HOGENOM" id="CLU_112527_5_0_2"/>
<dbReference type="InParanoid" id="Q8TT40"/>
<dbReference type="OrthoDB" id="10567at2157"/>
<dbReference type="PhylomeDB" id="Q8TT40"/>
<dbReference type="Proteomes" id="UP000002487">
    <property type="component" value="Chromosome"/>
</dbReference>
<dbReference type="GO" id="GO:0005737">
    <property type="term" value="C:cytoplasm"/>
    <property type="evidence" value="ECO:0007669"/>
    <property type="project" value="UniProtKB-SubCell"/>
</dbReference>
<dbReference type="GO" id="GO:0000428">
    <property type="term" value="C:DNA-directed RNA polymerase complex"/>
    <property type="evidence" value="ECO:0007669"/>
    <property type="project" value="UniProtKB-KW"/>
</dbReference>
<dbReference type="GO" id="GO:0003677">
    <property type="term" value="F:DNA binding"/>
    <property type="evidence" value="ECO:0007669"/>
    <property type="project" value="UniProtKB-UniRule"/>
</dbReference>
<dbReference type="GO" id="GO:0003899">
    <property type="term" value="F:DNA-directed RNA polymerase activity"/>
    <property type="evidence" value="ECO:0007669"/>
    <property type="project" value="UniProtKB-UniRule"/>
</dbReference>
<dbReference type="GO" id="GO:0006351">
    <property type="term" value="P:DNA-templated transcription"/>
    <property type="evidence" value="ECO:0007669"/>
    <property type="project" value="UniProtKB-UniRule"/>
</dbReference>
<dbReference type="Gene3D" id="3.90.940.10">
    <property type="match status" value="1"/>
</dbReference>
<dbReference type="HAMAP" id="MF_00192">
    <property type="entry name" value="RNApol_arch_Rpo6"/>
    <property type="match status" value="1"/>
</dbReference>
<dbReference type="InterPro" id="IPR020708">
    <property type="entry name" value="DNA-dir_RNA_polK_14-18kDa_CS"/>
</dbReference>
<dbReference type="InterPro" id="IPR006110">
    <property type="entry name" value="Pol_omega/Rpo6/RPB6"/>
</dbReference>
<dbReference type="InterPro" id="IPR036161">
    <property type="entry name" value="RPB6/omega-like_sf"/>
</dbReference>
<dbReference type="InterPro" id="IPR006111">
    <property type="entry name" value="Rpo6/Rpb6"/>
</dbReference>
<dbReference type="NCBIfam" id="NF002208">
    <property type="entry name" value="PRK01099.1-3"/>
    <property type="match status" value="1"/>
</dbReference>
<dbReference type="PANTHER" id="PTHR47227">
    <property type="entry name" value="DNA-DIRECTED RNA POLYMERASE SUBUNIT K"/>
    <property type="match status" value="1"/>
</dbReference>
<dbReference type="PANTHER" id="PTHR47227:SF5">
    <property type="entry name" value="DNA-DIRECTED RNA POLYMERASES I, II, AND III SUBUNIT RPABC2"/>
    <property type="match status" value="1"/>
</dbReference>
<dbReference type="Pfam" id="PF01192">
    <property type="entry name" value="RNA_pol_Rpb6"/>
    <property type="match status" value="1"/>
</dbReference>
<dbReference type="PIRSF" id="PIRSF000778">
    <property type="entry name" value="RpoK/RPB6"/>
    <property type="match status" value="1"/>
</dbReference>
<dbReference type="SMART" id="SM01409">
    <property type="entry name" value="RNA_pol_Rpb6"/>
    <property type="match status" value="1"/>
</dbReference>
<dbReference type="SUPFAM" id="SSF63562">
    <property type="entry name" value="RPB6/omega subunit-like"/>
    <property type="match status" value="1"/>
</dbReference>
<dbReference type="PROSITE" id="PS01111">
    <property type="entry name" value="RNA_POL_K_14KD"/>
    <property type="match status" value="1"/>
</dbReference>
<organism>
    <name type="scientific">Methanosarcina acetivorans (strain ATCC 35395 / DSM 2834 / JCM 12185 / C2A)</name>
    <dbReference type="NCBI Taxonomy" id="188937"/>
    <lineage>
        <taxon>Archaea</taxon>
        <taxon>Methanobacteriati</taxon>
        <taxon>Methanobacteriota</taxon>
        <taxon>Stenosarchaea group</taxon>
        <taxon>Methanomicrobia</taxon>
        <taxon>Methanosarcinales</taxon>
        <taxon>Methanosarcinaceae</taxon>
        <taxon>Methanosarcina</taxon>
    </lineage>
</organism>
<gene>
    <name evidence="1" type="primary">rpo6</name>
    <name evidence="1 2" type="synonym">rpoK</name>
    <name type="ordered locus">MA_0599</name>
</gene>
<sequence length="60" mass="6619">MVKEKYTRFERARIVGARALQIAMGAPVLVDDDGRLDPLGVAIAELKAEIIPITVKRKKS</sequence>
<comment type="function">
    <text evidence="1">DNA-dependent RNA polymerase (RNAP) catalyzes the transcription of DNA into RNA using the four ribonucleoside triphosphates as substrates.</text>
</comment>
<comment type="catalytic activity">
    <reaction evidence="1">
        <text>RNA(n) + a ribonucleoside 5'-triphosphate = RNA(n+1) + diphosphate</text>
        <dbReference type="Rhea" id="RHEA:21248"/>
        <dbReference type="Rhea" id="RHEA-COMP:14527"/>
        <dbReference type="Rhea" id="RHEA-COMP:17342"/>
        <dbReference type="ChEBI" id="CHEBI:33019"/>
        <dbReference type="ChEBI" id="CHEBI:61557"/>
        <dbReference type="ChEBI" id="CHEBI:140395"/>
        <dbReference type="EC" id="2.7.7.6"/>
    </reaction>
</comment>
<comment type="subunit">
    <text evidence="1">Part of the RNA polymerase complex.</text>
</comment>
<comment type="subcellular location">
    <subcellularLocation>
        <location evidence="1">Cytoplasm</location>
    </subcellularLocation>
</comment>
<comment type="similarity">
    <text evidence="1">Belongs to the archaeal Rpo6/eukaryotic RPB6 RNA polymerase subunit family.</text>
</comment>
<proteinExistence type="inferred from homology"/>